<reference key="1">
    <citation type="journal article" date="2006" name="J. Bacteriol.">
        <title>Complete genome sequence of Yersinia pestis strains Antiqua and Nepal516: evidence of gene reduction in an emerging pathogen.</title>
        <authorList>
            <person name="Chain P.S.G."/>
            <person name="Hu P."/>
            <person name="Malfatti S.A."/>
            <person name="Radnedge L."/>
            <person name="Larimer F."/>
            <person name="Vergez L.M."/>
            <person name="Worsham P."/>
            <person name="Chu M.C."/>
            <person name="Andersen G.L."/>
        </authorList>
    </citation>
    <scope>NUCLEOTIDE SEQUENCE [LARGE SCALE GENOMIC DNA]</scope>
    <source>
        <strain>Antiqua</strain>
    </source>
</reference>
<evidence type="ECO:0000255" key="1">
    <source>
        <dbReference type="HAMAP-Rule" id="MF_00254"/>
    </source>
</evidence>
<accession>Q1C3J9</accession>
<protein>
    <recommendedName>
        <fullName evidence="1">Glycine--tRNA ligase alpha subunit</fullName>
        <ecNumber evidence="1">6.1.1.14</ecNumber>
    </recommendedName>
    <alternativeName>
        <fullName evidence="1">Glycyl-tRNA synthetase alpha subunit</fullName>
        <shortName evidence="1">GlyRS</shortName>
    </alternativeName>
</protein>
<organism>
    <name type="scientific">Yersinia pestis bv. Antiqua (strain Antiqua)</name>
    <dbReference type="NCBI Taxonomy" id="360102"/>
    <lineage>
        <taxon>Bacteria</taxon>
        <taxon>Pseudomonadati</taxon>
        <taxon>Pseudomonadota</taxon>
        <taxon>Gammaproteobacteria</taxon>
        <taxon>Enterobacterales</taxon>
        <taxon>Yersiniaceae</taxon>
        <taxon>Yersinia</taxon>
    </lineage>
</organism>
<name>SYGA_YERPA</name>
<keyword id="KW-0030">Aminoacyl-tRNA synthetase</keyword>
<keyword id="KW-0067">ATP-binding</keyword>
<keyword id="KW-0963">Cytoplasm</keyword>
<keyword id="KW-0436">Ligase</keyword>
<keyword id="KW-0547">Nucleotide-binding</keyword>
<keyword id="KW-0648">Protein biosynthesis</keyword>
<sequence>MQKFDTKTFQGLILTLQDYWARQGCTIVQPLDMEVGAGTSHPMTCLRAIGPEPIAAAYVQPSRRPTDGRYGENPNRLQHYYQFQVIIKPSPDNIQELYLGSLKELGLDPTIHDIRFVEDNWENPTLGAWGLGWEVWLNGMEVTQFTYFQQVGGLECKPVTGEITYGLERLAMYIQGVDSVYDLIWCDGPLGTTTYGDIYHQNEVEQSTYNFEYADVDFLFSCFEQYEKEAQSLLALETPLPLPAYERILKAGHTFNLLDARKAISVTERQRYILRIRTLTKAVAEAYYASREALGFPMCKKNQN</sequence>
<dbReference type="EC" id="6.1.1.14" evidence="1"/>
<dbReference type="EMBL" id="CP000308">
    <property type="protein sequence ID" value="ABG14973.1"/>
    <property type="molecule type" value="Genomic_DNA"/>
</dbReference>
<dbReference type="RefSeq" id="WP_002209624.1">
    <property type="nucleotide sequence ID" value="NZ_CP009906.1"/>
</dbReference>
<dbReference type="SMR" id="Q1C3J9"/>
<dbReference type="GeneID" id="96663419"/>
<dbReference type="KEGG" id="ypa:YPA_3011"/>
<dbReference type="Proteomes" id="UP000001971">
    <property type="component" value="Chromosome"/>
</dbReference>
<dbReference type="GO" id="GO:0005829">
    <property type="term" value="C:cytosol"/>
    <property type="evidence" value="ECO:0007669"/>
    <property type="project" value="TreeGrafter"/>
</dbReference>
<dbReference type="GO" id="GO:0005524">
    <property type="term" value="F:ATP binding"/>
    <property type="evidence" value="ECO:0007669"/>
    <property type="project" value="UniProtKB-UniRule"/>
</dbReference>
<dbReference type="GO" id="GO:0004820">
    <property type="term" value="F:glycine-tRNA ligase activity"/>
    <property type="evidence" value="ECO:0007669"/>
    <property type="project" value="UniProtKB-UniRule"/>
</dbReference>
<dbReference type="GO" id="GO:0006426">
    <property type="term" value="P:glycyl-tRNA aminoacylation"/>
    <property type="evidence" value="ECO:0007669"/>
    <property type="project" value="UniProtKB-UniRule"/>
</dbReference>
<dbReference type="CDD" id="cd00733">
    <property type="entry name" value="GlyRS_alpha_core"/>
    <property type="match status" value="1"/>
</dbReference>
<dbReference type="FunFam" id="1.20.58.180:FF:000001">
    <property type="entry name" value="Glycine--tRNA ligase alpha subunit"/>
    <property type="match status" value="1"/>
</dbReference>
<dbReference type="FunFam" id="3.30.930.10:FF:000006">
    <property type="entry name" value="Glycine--tRNA ligase alpha subunit"/>
    <property type="match status" value="1"/>
</dbReference>
<dbReference type="Gene3D" id="3.30.930.10">
    <property type="entry name" value="Bira Bifunctional Protein, Domain 2"/>
    <property type="match status" value="1"/>
</dbReference>
<dbReference type="Gene3D" id="1.20.58.180">
    <property type="entry name" value="Class II aaRS and biotin synthetases, domain 2"/>
    <property type="match status" value="1"/>
</dbReference>
<dbReference type="HAMAP" id="MF_00254">
    <property type="entry name" value="Gly_tRNA_synth_alpha"/>
    <property type="match status" value="1"/>
</dbReference>
<dbReference type="InterPro" id="IPR045864">
    <property type="entry name" value="aa-tRNA-synth_II/BPL/LPL"/>
</dbReference>
<dbReference type="InterPro" id="IPR006194">
    <property type="entry name" value="Gly-tRNA-synth_heterodimer"/>
</dbReference>
<dbReference type="InterPro" id="IPR002310">
    <property type="entry name" value="Gly-tRNA_ligase_asu"/>
</dbReference>
<dbReference type="NCBIfam" id="TIGR00388">
    <property type="entry name" value="glyQ"/>
    <property type="match status" value="1"/>
</dbReference>
<dbReference type="NCBIfam" id="NF006827">
    <property type="entry name" value="PRK09348.1"/>
    <property type="match status" value="1"/>
</dbReference>
<dbReference type="PANTHER" id="PTHR30075:SF2">
    <property type="entry name" value="GLYCINE--TRNA LIGASE, CHLOROPLASTIC_MITOCHONDRIAL 2"/>
    <property type="match status" value="1"/>
</dbReference>
<dbReference type="PANTHER" id="PTHR30075">
    <property type="entry name" value="GLYCYL-TRNA SYNTHETASE"/>
    <property type="match status" value="1"/>
</dbReference>
<dbReference type="Pfam" id="PF02091">
    <property type="entry name" value="tRNA-synt_2e"/>
    <property type="match status" value="1"/>
</dbReference>
<dbReference type="PRINTS" id="PR01044">
    <property type="entry name" value="TRNASYNTHGA"/>
</dbReference>
<dbReference type="SUPFAM" id="SSF55681">
    <property type="entry name" value="Class II aaRS and biotin synthetases"/>
    <property type="match status" value="1"/>
</dbReference>
<dbReference type="PROSITE" id="PS50861">
    <property type="entry name" value="AA_TRNA_LIGASE_II_GLYAB"/>
    <property type="match status" value="1"/>
</dbReference>
<proteinExistence type="inferred from homology"/>
<feature type="chain" id="PRO_1000047533" description="Glycine--tRNA ligase alpha subunit">
    <location>
        <begin position="1"/>
        <end position="304"/>
    </location>
</feature>
<gene>
    <name evidence="1" type="primary">glyQ</name>
    <name type="ordered locus">YPA_3011</name>
</gene>
<comment type="catalytic activity">
    <reaction evidence="1">
        <text>tRNA(Gly) + glycine + ATP = glycyl-tRNA(Gly) + AMP + diphosphate</text>
        <dbReference type="Rhea" id="RHEA:16013"/>
        <dbReference type="Rhea" id="RHEA-COMP:9664"/>
        <dbReference type="Rhea" id="RHEA-COMP:9683"/>
        <dbReference type="ChEBI" id="CHEBI:30616"/>
        <dbReference type="ChEBI" id="CHEBI:33019"/>
        <dbReference type="ChEBI" id="CHEBI:57305"/>
        <dbReference type="ChEBI" id="CHEBI:78442"/>
        <dbReference type="ChEBI" id="CHEBI:78522"/>
        <dbReference type="ChEBI" id="CHEBI:456215"/>
        <dbReference type="EC" id="6.1.1.14"/>
    </reaction>
</comment>
<comment type="subunit">
    <text evidence="1">Tetramer of two alpha and two beta subunits.</text>
</comment>
<comment type="subcellular location">
    <subcellularLocation>
        <location evidence="1">Cytoplasm</location>
    </subcellularLocation>
</comment>
<comment type="similarity">
    <text evidence="1">Belongs to the class-II aminoacyl-tRNA synthetase family.</text>
</comment>